<proteinExistence type="evidence at protein level"/>
<gene>
    <name evidence="5" type="primary">RHEX</name>
    <name evidence="5" type="synonym">C1orf186</name>
</gene>
<sequence length="172" mass="19405">MLTEVMEVWHGLVIAVVSLFLQACFLTAINYLLSRHMAHKSEQILKAASLQVPRPSPGHHHPPAVKEMKETQTERDIPMSDSLYRHDSDTPSDSLDSSCSSPPACQATEDVDYTQVVFSDPGELKNDSPLDYENIKEITDYVNVNPERHKPSFWYFVNPALSEPAEYDQVAM</sequence>
<evidence type="ECO:0000255" key="1"/>
<evidence type="ECO:0000256" key="2">
    <source>
        <dbReference type="SAM" id="MobiDB-lite"/>
    </source>
</evidence>
<evidence type="ECO:0000269" key="3">
    <source>
    </source>
</evidence>
<evidence type="ECO:0000303" key="4">
    <source>
    </source>
</evidence>
<evidence type="ECO:0000312" key="5">
    <source>
        <dbReference type="HGNC" id="HGNC:25341"/>
    </source>
</evidence>
<feature type="chain" id="PRO_0000271103" description="Regulator of hemoglobinization and erythroid cell expansion protein">
    <location>
        <begin position="1"/>
        <end position="172"/>
    </location>
</feature>
<feature type="transmembrane region" description="Helical" evidence="1">
    <location>
        <begin position="9"/>
        <end position="29"/>
    </location>
</feature>
<feature type="region of interest" description="Disordered" evidence="2">
    <location>
        <begin position="52"/>
        <end position="106"/>
    </location>
</feature>
<feature type="compositionally biased region" description="Basic and acidic residues" evidence="2">
    <location>
        <begin position="64"/>
        <end position="89"/>
    </location>
</feature>
<feature type="compositionally biased region" description="Low complexity" evidence="2">
    <location>
        <begin position="91"/>
        <end position="103"/>
    </location>
</feature>
<feature type="modified residue" description="Phosphotyrosine" evidence="3">
    <location>
        <position position="132"/>
    </location>
</feature>
<feature type="modified residue" description="Phosphotyrosine" evidence="3">
    <location>
        <position position="141"/>
    </location>
</feature>
<protein>
    <recommendedName>
        <fullName evidence="5">Regulator of hemoglobinization and erythroid cell expansion protein</fullName>
    </recommendedName>
    <alternativeName>
        <fullName evidence="4">Regulator of human erythroid cell expansion protein</fullName>
    </alternativeName>
</protein>
<keyword id="KW-1003">Cell membrane</keyword>
<keyword id="KW-0221">Differentiation</keyword>
<keyword id="KW-0265">Erythrocyte maturation</keyword>
<keyword id="KW-0472">Membrane</keyword>
<keyword id="KW-0597">Phosphoprotein</keyword>
<keyword id="KW-1267">Proteomics identification</keyword>
<keyword id="KW-1185">Reference proteome</keyword>
<keyword id="KW-0812">Transmembrane</keyword>
<keyword id="KW-1133">Transmembrane helix</keyword>
<organism>
    <name type="scientific">Homo sapiens</name>
    <name type="common">Human</name>
    <dbReference type="NCBI Taxonomy" id="9606"/>
    <lineage>
        <taxon>Eukaryota</taxon>
        <taxon>Metazoa</taxon>
        <taxon>Chordata</taxon>
        <taxon>Craniata</taxon>
        <taxon>Vertebrata</taxon>
        <taxon>Euteleostomi</taxon>
        <taxon>Mammalia</taxon>
        <taxon>Eutheria</taxon>
        <taxon>Euarchontoglires</taxon>
        <taxon>Primates</taxon>
        <taxon>Haplorrhini</taxon>
        <taxon>Catarrhini</taxon>
        <taxon>Hominidae</taxon>
        <taxon>Homo</taxon>
    </lineage>
</organism>
<accession>Q6ZWK4</accession>
<comment type="function">
    <text evidence="3">Acts as a signaling transduction factor of the EPO-EPOR signaling pathway promoting erythroid cell differentiation (PubMed:25092874).</text>
</comment>
<comment type="subunit">
    <text evidence="3">Interacts with EPOR; this interaction occurs in a erythropoietin (EPO)-dependent manner (PubMed:25092874). Interacts with JAK2; this interaction occurs in a erythropoietin (EPO)-dependent manner (PubMed:25092874). Interacts (via tyrosine-phosphorylated form) with GRB2 (PubMed:25092874).</text>
</comment>
<comment type="interaction">
    <interactant intactId="EBI-18304046">
        <id>Q6ZWK4</id>
    </interactant>
    <interactant intactId="EBI-9304251">
        <id>Q05329</id>
        <label>GAD2</label>
    </interactant>
    <organismsDiffer>false</organismsDiffer>
    <experiments>3</experiments>
</comment>
<comment type="interaction">
    <interactant intactId="EBI-18304046">
        <id>Q6ZWK4</id>
    </interactant>
    <interactant intactId="EBI-2515857">
        <id>O43681</id>
        <label>GET3</label>
    </interactant>
    <organismsDiffer>false</organismsDiffer>
    <experiments>3</experiments>
</comment>
<comment type="interaction">
    <interactant intactId="EBI-18304046">
        <id>Q6ZWK4</id>
    </interactant>
    <interactant intactId="EBI-741171">
        <id>Q96AL5</id>
        <label>PBX3</label>
    </interactant>
    <organismsDiffer>false</organismsDiffer>
    <experiments>3</experiments>
</comment>
<comment type="interaction">
    <interactant intactId="EBI-18304046">
        <id>Q6ZWK4</id>
    </interactant>
    <interactant intactId="EBI-3232108">
        <id>Q8N0V3</id>
        <label>RBFA</label>
    </interactant>
    <organismsDiffer>false</organismsDiffer>
    <experiments>3</experiments>
</comment>
<comment type="interaction">
    <interactant intactId="EBI-18304046">
        <id>Q6ZWK4</id>
    </interactant>
    <interactant intactId="EBI-697911">
        <id>Q99961</id>
        <label>SH3GL1</label>
    </interactant>
    <organismsDiffer>false</organismsDiffer>
    <experiments>3</experiments>
</comment>
<comment type="interaction">
    <interactant intactId="EBI-18304046">
        <id>Q6ZWK4</id>
    </interactant>
    <interactant intactId="EBI-2623095">
        <id>Q9Y371</id>
        <label>SH3GLB1</label>
    </interactant>
    <organismsDiffer>false</organismsDiffer>
    <experiments>3</experiments>
</comment>
<comment type="interaction">
    <interactant intactId="EBI-18304046">
        <id>Q6ZWK4</id>
    </interactant>
    <interactant intactId="EBI-2822329">
        <id>Q13596</id>
        <label>SNX1</label>
    </interactant>
    <organismsDiffer>false</organismsDiffer>
    <experiments>3</experiments>
</comment>
<comment type="subcellular location">
    <subcellularLocation>
        <location evidence="3">Cell membrane</location>
        <topology evidence="1">Single-pass membrane protein</topology>
    </subcellularLocation>
</comment>
<comment type="tissue specificity">
    <text evidence="3">Expressed in the proerythroblasts (at protein level) (PubMed:25092874). Expressed strongly in the kidney (PubMed:25092874). Expressed weakly in the pancreas, liver and lung (PubMed:25092874). Expressed strongly in erythroid progenitor cells (EPCs) (PubMed:25092874). Expressed weakly in T-cells and neutrophils (PubMed:25092874).</text>
</comment>
<comment type="induction">
    <text evidence="3">Up-regulated during erythroid differentiation (PubMed:25092874).</text>
</comment>
<comment type="PTM">
    <text evidence="3">Phosphorylated. Phosphorylation on Tyr-132 and Tyr-141 occurs in a erythropoietin (EPO)-dependent manner (PubMed:25092874).</text>
</comment>
<name>RHEX_HUMAN</name>
<dbReference type="EMBL" id="AK122631">
    <property type="protein sequence ID" value="BAC85497.1"/>
    <property type="molecule type" value="mRNA"/>
</dbReference>
<dbReference type="EMBL" id="BX571818">
    <property type="status" value="NOT_ANNOTATED_CDS"/>
    <property type="molecule type" value="Genomic_DNA"/>
</dbReference>
<dbReference type="EMBL" id="BC071785">
    <property type="protein sequence ID" value="AAH71785.1"/>
    <property type="molecule type" value="mRNA"/>
</dbReference>
<dbReference type="CCDS" id="CCDS73014.1"/>
<dbReference type="RefSeq" id="NP_001007545.1">
    <property type="nucleotide sequence ID" value="NM_001007544.4"/>
</dbReference>
<dbReference type="RefSeq" id="NP_001356419.1">
    <property type="nucleotide sequence ID" value="NM_001369490.1"/>
</dbReference>
<dbReference type="RefSeq" id="XP_005272795.1">
    <property type="nucleotide sequence ID" value="XM_005272738.3"/>
</dbReference>
<dbReference type="SMR" id="Q6ZWK4"/>
<dbReference type="BioGRID" id="136831">
    <property type="interactions" value="35"/>
</dbReference>
<dbReference type="FunCoup" id="Q6ZWK4">
    <property type="interactions" value="363"/>
</dbReference>
<dbReference type="IntAct" id="Q6ZWK4">
    <property type="interactions" value="21"/>
</dbReference>
<dbReference type="STRING" id="9606.ENSP00000356093"/>
<dbReference type="iPTMnet" id="Q6ZWK4"/>
<dbReference type="PhosphoSitePlus" id="Q6ZWK4"/>
<dbReference type="BioMuta" id="C1orf186"/>
<dbReference type="DMDM" id="74749716"/>
<dbReference type="MassIVE" id="Q6ZWK4"/>
<dbReference type="PaxDb" id="9606-ENSP00000356093"/>
<dbReference type="PeptideAtlas" id="Q6ZWK4"/>
<dbReference type="ProteomicsDB" id="68491"/>
<dbReference type="Antibodypedia" id="72281">
    <property type="antibodies" value="53 antibodies from 9 providers"/>
</dbReference>
<dbReference type="DNASU" id="440712"/>
<dbReference type="Ensembl" id="ENST00000331555.10">
    <property type="protein sequence ID" value="ENSP00000356093.1"/>
    <property type="gene ID" value="ENSG00000263961.8"/>
</dbReference>
<dbReference type="Ensembl" id="ENST00000582070.3">
    <property type="protein sequence ID" value="ENSP00000463990.1"/>
    <property type="gene ID" value="ENSG00000263961.8"/>
</dbReference>
<dbReference type="Ensembl" id="ENST00000603488.5">
    <property type="protein sequence ID" value="ENSP00000474994.1"/>
    <property type="gene ID" value="ENSG00000263961.8"/>
</dbReference>
<dbReference type="GeneID" id="440712"/>
<dbReference type="KEGG" id="hsa:440712"/>
<dbReference type="MANE-Select" id="ENST00000331555.10">
    <property type="protein sequence ID" value="ENSP00000356093.1"/>
    <property type="RefSeq nucleotide sequence ID" value="NM_001007544.4"/>
    <property type="RefSeq protein sequence ID" value="NP_001007545.1"/>
</dbReference>
<dbReference type="UCSC" id="uc001hdt.3">
    <property type="organism name" value="human"/>
</dbReference>
<dbReference type="AGR" id="HGNC:25341"/>
<dbReference type="CTD" id="440712"/>
<dbReference type="GeneCards" id="RHEX"/>
<dbReference type="HGNC" id="HGNC:25341">
    <property type="gene designation" value="RHEX"/>
</dbReference>
<dbReference type="HPA" id="ENSG00000263961">
    <property type="expression patterns" value="Tissue enhanced (cervix)"/>
</dbReference>
<dbReference type="MalaCards" id="RHEX"/>
<dbReference type="MIM" id="616088">
    <property type="type" value="gene"/>
</dbReference>
<dbReference type="neXtProt" id="NX_Q6ZWK4"/>
<dbReference type="OpenTargets" id="ENSG00000263961"/>
<dbReference type="PharmGKB" id="PA142672434"/>
<dbReference type="VEuPathDB" id="HostDB:ENSG00000263961"/>
<dbReference type="eggNOG" id="ENOG502T2N6">
    <property type="taxonomic scope" value="Eukaryota"/>
</dbReference>
<dbReference type="GeneTree" id="ENSGT00390000004770"/>
<dbReference type="InParanoid" id="Q6ZWK4"/>
<dbReference type="OMA" id="HKPNFWT"/>
<dbReference type="OrthoDB" id="9422279at2759"/>
<dbReference type="PAN-GO" id="Q6ZWK4">
    <property type="GO annotations" value="1 GO annotation based on evolutionary models"/>
</dbReference>
<dbReference type="PhylomeDB" id="Q6ZWK4"/>
<dbReference type="TreeFam" id="TF353616"/>
<dbReference type="PathwayCommons" id="Q6ZWK4"/>
<dbReference type="SignaLink" id="Q6ZWK4"/>
<dbReference type="BioGRID-ORCS" id="440712">
    <property type="hits" value="5 hits in 1131 CRISPR screens"/>
</dbReference>
<dbReference type="ChiTaRS" id="C1orf186">
    <property type="organism name" value="human"/>
</dbReference>
<dbReference type="GenomeRNAi" id="440712"/>
<dbReference type="Pharos" id="Q6ZWK4">
    <property type="development level" value="Tbio"/>
</dbReference>
<dbReference type="PRO" id="PR:Q6ZWK4"/>
<dbReference type="Proteomes" id="UP000005640">
    <property type="component" value="Chromosome 1"/>
</dbReference>
<dbReference type="RNAct" id="Q6ZWK4">
    <property type="molecule type" value="protein"/>
</dbReference>
<dbReference type="Bgee" id="ENSG00000263961">
    <property type="expression patterns" value="Expressed in kidney epithelium and 127 other cell types or tissues"/>
</dbReference>
<dbReference type="ExpressionAtlas" id="Q6ZWK4">
    <property type="expression patterns" value="baseline and differential"/>
</dbReference>
<dbReference type="GO" id="GO:0005886">
    <property type="term" value="C:plasma membrane"/>
    <property type="evidence" value="ECO:0000314"/>
    <property type="project" value="UniProtKB"/>
</dbReference>
<dbReference type="GO" id="GO:0005128">
    <property type="term" value="F:erythropoietin receptor binding"/>
    <property type="evidence" value="ECO:0000314"/>
    <property type="project" value="UniProtKB"/>
</dbReference>
<dbReference type="GO" id="GO:0036018">
    <property type="term" value="P:cellular response to erythropoietin"/>
    <property type="evidence" value="ECO:0000315"/>
    <property type="project" value="UniProtKB"/>
</dbReference>
<dbReference type="GO" id="GO:0043249">
    <property type="term" value="P:erythrocyte maturation"/>
    <property type="evidence" value="ECO:0007669"/>
    <property type="project" value="UniProtKB-KW"/>
</dbReference>
<dbReference type="GO" id="GO:0038162">
    <property type="term" value="P:erythropoietin-mediated signaling pathway"/>
    <property type="evidence" value="ECO:0000315"/>
    <property type="project" value="UniProtKB"/>
</dbReference>
<dbReference type="GO" id="GO:0045648">
    <property type="term" value="P:positive regulation of erythrocyte differentiation"/>
    <property type="evidence" value="ECO:0000315"/>
    <property type="project" value="UniProtKB"/>
</dbReference>
<dbReference type="InterPro" id="IPR031517">
    <property type="entry name" value="RHEX-like"/>
</dbReference>
<dbReference type="PANTHER" id="PTHR38491">
    <property type="entry name" value="REGULATOR OF HEMOGLOBINIZATION AND ERYTHROID CELL EXPANSION PROTEIN"/>
    <property type="match status" value="1"/>
</dbReference>
<dbReference type="PANTHER" id="PTHR38491:SF1">
    <property type="entry name" value="REGULATOR OF HEMOGLOBINIZATION AND ERYTHROID CELL EXPANSION PROTEIN"/>
    <property type="match status" value="1"/>
</dbReference>
<dbReference type="Pfam" id="PF15763">
    <property type="entry name" value="DUF4692"/>
    <property type="match status" value="1"/>
</dbReference>
<reference key="1">
    <citation type="journal article" date="2004" name="Nat. Genet.">
        <title>Complete sequencing and characterization of 21,243 full-length human cDNAs.</title>
        <authorList>
            <person name="Ota T."/>
            <person name="Suzuki Y."/>
            <person name="Nishikawa T."/>
            <person name="Otsuki T."/>
            <person name="Sugiyama T."/>
            <person name="Irie R."/>
            <person name="Wakamatsu A."/>
            <person name="Hayashi K."/>
            <person name="Sato H."/>
            <person name="Nagai K."/>
            <person name="Kimura K."/>
            <person name="Makita H."/>
            <person name="Sekine M."/>
            <person name="Obayashi M."/>
            <person name="Nishi T."/>
            <person name="Shibahara T."/>
            <person name="Tanaka T."/>
            <person name="Ishii S."/>
            <person name="Yamamoto J."/>
            <person name="Saito K."/>
            <person name="Kawai Y."/>
            <person name="Isono Y."/>
            <person name="Nakamura Y."/>
            <person name="Nagahari K."/>
            <person name="Murakami K."/>
            <person name="Yasuda T."/>
            <person name="Iwayanagi T."/>
            <person name="Wagatsuma M."/>
            <person name="Shiratori A."/>
            <person name="Sudo H."/>
            <person name="Hosoiri T."/>
            <person name="Kaku Y."/>
            <person name="Kodaira H."/>
            <person name="Kondo H."/>
            <person name="Sugawara M."/>
            <person name="Takahashi M."/>
            <person name="Kanda K."/>
            <person name="Yokoi T."/>
            <person name="Furuya T."/>
            <person name="Kikkawa E."/>
            <person name="Omura Y."/>
            <person name="Abe K."/>
            <person name="Kamihara K."/>
            <person name="Katsuta N."/>
            <person name="Sato K."/>
            <person name="Tanikawa M."/>
            <person name="Yamazaki M."/>
            <person name="Ninomiya K."/>
            <person name="Ishibashi T."/>
            <person name="Yamashita H."/>
            <person name="Murakawa K."/>
            <person name="Fujimori K."/>
            <person name="Tanai H."/>
            <person name="Kimata M."/>
            <person name="Watanabe M."/>
            <person name="Hiraoka S."/>
            <person name="Chiba Y."/>
            <person name="Ishida S."/>
            <person name="Ono Y."/>
            <person name="Takiguchi S."/>
            <person name="Watanabe S."/>
            <person name="Yosida M."/>
            <person name="Hotuta T."/>
            <person name="Kusano J."/>
            <person name="Kanehori K."/>
            <person name="Takahashi-Fujii A."/>
            <person name="Hara H."/>
            <person name="Tanase T.-O."/>
            <person name="Nomura Y."/>
            <person name="Togiya S."/>
            <person name="Komai F."/>
            <person name="Hara R."/>
            <person name="Takeuchi K."/>
            <person name="Arita M."/>
            <person name="Imose N."/>
            <person name="Musashino K."/>
            <person name="Yuuki H."/>
            <person name="Oshima A."/>
            <person name="Sasaki N."/>
            <person name="Aotsuka S."/>
            <person name="Yoshikawa Y."/>
            <person name="Matsunawa H."/>
            <person name="Ichihara T."/>
            <person name="Shiohata N."/>
            <person name="Sano S."/>
            <person name="Moriya S."/>
            <person name="Momiyama H."/>
            <person name="Satoh N."/>
            <person name="Takami S."/>
            <person name="Terashima Y."/>
            <person name="Suzuki O."/>
            <person name="Nakagawa S."/>
            <person name="Senoh A."/>
            <person name="Mizoguchi H."/>
            <person name="Goto Y."/>
            <person name="Shimizu F."/>
            <person name="Wakebe H."/>
            <person name="Hishigaki H."/>
            <person name="Watanabe T."/>
            <person name="Sugiyama A."/>
            <person name="Takemoto M."/>
            <person name="Kawakami B."/>
            <person name="Yamazaki M."/>
            <person name="Watanabe K."/>
            <person name="Kumagai A."/>
            <person name="Itakura S."/>
            <person name="Fukuzumi Y."/>
            <person name="Fujimori Y."/>
            <person name="Komiyama M."/>
            <person name="Tashiro H."/>
            <person name="Tanigami A."/>
            <person name="Fujiwara T."/>
            <person name="Ono T."/>
            <person name="Yamada K."/>
            <person name="Fujii Y."/>
            <person name="Ozaki K."/>
            <person name="Hirao M."/>
            <person name="Ohmori Y."/>
            <person name="Kawabata A."/>
            <person name="Hikiji T."/>
            <person name="Kobatake N."/>
            <person name="Inagaki H."/>
            <person name="Ikema Y."/>
            <person name="Okamoto S."/>
            <person name="Okitani R."/>
            <person name="Kawakami T."/>
            <person name="Noguchi S."/>
            <person name="Itoh T."/>
            <person name="Shigeta K."/>
            <person name="Senba T."/>
            <person name="Matsumura K."/>
            <person name="Nakajima Y."/>
            <person name="Mizuno T."/>
            <person name="Morinaga M."/>
            <person name="Sasaki M."/>
            <person name="Togashi T."/>
            <person name="Oyama M."/>
            <person name="Hata H."/>
            <person name="Watanabe M."/>
            <person name="Komatsu T."/>
            <person name="Mizushima-Sugano J."/>
            <person name="Satoh T."/>
            <person name="Shirai Y."/>
            <person name="Takahashi Y."/>
            <person name="Nakagawa K."/>
            <person name="Okumura K."/>
            <person name="Nagase T."/>
            <person name="Nomura N."/>
            <person name="Kikuchi H."/>
            <person name="Masuho Y."/>
            <person name="Yamashita R."/>
            <person name="Nakai K."/>
            <person name="Yada T."/>
            <person name="Nakamura Y."/>
            <person name="Ohara O."/>
            <person name="Isogai T."/>
            <person name="Sugano S."/>
        </authorList>
    </citation>
    <scope>NUCLEOTIDE SEQUENCE [LARGE SCALE MRNA]</scope>
    <source>
        <tissue>Kidney</tissue>
    </source>
</reference>
<reference key="2">
    <citation type="journal article" date="2006" name="Nature">
        <title>The DNA sequence and biological annotation of human chromosome 1.</title>
        <authorList>
            <person name="Gregory S.G."/>
            <person name="Barlow K.F."/>
            <person name="McLay K.E."/>
            <person name="Kaul R."/>
            <person name="Swarbreck D."/>
            <person name="Dunham A."/>
            <person name="Scott C.E."/>
            <person name="Howe K.L."/>
            <person name="Woodfine K."/>
            <person name="Spencer C.C.A."/>
            <person name="Jones M.C."/>
            <person name="Gillson C."/>
            <person name="Searle S."/>
            <person name="Zhou Y."/>
            <person name="Kokocinski F."/>
            <person name="McDonald L."/>
            <person name="Evans R."/>
            <person name="Phillips K."/>
            <person name="Atkinson A."/>
            <person name="Cooper R."/>
            <person name="Jones C."/>
            <person name="Hall R.E."/>
            <person name="Andrews T.D."/>
            <person name="Lloyd C."/>
            <person name="Ainscough R."/>
            <person name="Almeida J.P."/>
            <person name="Ambrose K.D."/>
            <person name="Anderson F."/>
            <person name="Andrew R.W."/>
            <person name="Ashwell R.I.S."/>
            <person name="Aubin K."/>
            <person name="Babbage A.K."/>
            <person name="Bagguley C.L."/>
            <person name="Bailey J."/>
            <person name="Beasley H."/>
            <person name="Bethel G."/>
            <person name="Bird C.P."/>
            <person name="Bray-Allen S."/>
            <person name="Brown J.Y."/>
            <person name="Brown A.J."/>
            <person name="Buckley D."/>
            <person name="Burton J."/>
            <person name="Bye J."/>
            <person name="Carder C."/>
            <person name="Chapman J.C."/>
            <person name="Clark S.Y."/>
            <person name="Clarke G."/>
            <person name="Clee C."/>
            <person name="Cobley V."/>
            <person name="Collier R.E."/>
            <person name="Corby N."/>
            <person name="Coville G.J."/>
            <person name="Davies J."/>
            <person name="Deadman R."/>
            <person name="Dunn M."/>
            <person name="Earthrowl M."/>
            <person name="Ellington A.G."/>
            <person name="Errington H."/>
            <person name="Frankish A."/>
            <person name="Frankland J."/>
            <person name="French L."/>
            <person name="Garner P."/>
            <person name="Garnett J."/>
            <person name="Gay L."/>
            <person name="Ghori M.R.J."/>
            <person name="Gibson R."/>
            <person name="Gilby L.M."/>
            <person name="Gillett W."/>
            <person name="Glithero R.J."/>
            <person name="Grafham D.V."/>
            <person name="Griffiths C."/>
            <person name="Griffiths-Jones S."/>
            <person name="Grocock R."/>
            <person name="Hammond S."/>
            <person name="Harrison E.S.I."/>
            <person name="Hart E."/>
            <person name="Haugen E."/>
            <person name="Heath P.D."/>
            <person name="Holmes S."/>
            <person name="Holt K."/>
            <person name="Howden P.J."/>
            <person name="Hunt A.R."/>
            <person name="Hunt S.E."/>
            <person name="Hunter G."/>
            <person name="Isherwood J."/>
            <person name="James R."/>
            <person name="Johnson C."/>
            <person name="Johnson D."/>
            <person name="Joy A."/>
            <person name="Kay M."/>
            <person name="Kershaw J.K."/>
            <person name="Kibukawa M."/>
            <person name="Kimberley A.M."/>
            <person name="King A."/>
            <person name="Knights A.J."/>
            <person name="Lad H."/>
            <person name="Laird G."/>
            <person name="Lawlor S."/>
            <person name="Leongamornlert D.A."/>
            <person name="Lloyd D.M."/>
            <person name="Loveland J."/>
            <person name="Lovell J."/>
            <person name="Lush M.J."/>
            <person name="Lyne R."/>
            <person name="Martin S."/>
            <person name="Mashreghi-Mohammadi M."/>
            <person name="Matthews L."/>
            <person name="Matthews N.S.W."/>
            <person name="McLaren S."/>
            <person name="Milne S."/>
            <person name="Mistry S."/>
            <person name="Moore M.J.F."/>
            <person name="Nickerson T."/>
            <person name="O'Dell C.N."/>
            <person name="Oliver K."/>
            <person name="Palmeiri A."/>
            <person name="Palmer S.A."/>
            <person name="Parker A."/>
            <person name="Patel D."/>
            <person name="Pearce A.V."/>
            <person name="Peck A.I."/>
            <person name="Pelan S."/>
            <person name="Phelps K."/>
            <person name="Phillimore B.J."/>
            <person name="Plumb R."/>
            <person name="Rajan J."/>
            <person name="Raymond C."/>
            <person name="Rouse G."/>
            <person name="Saenphimmachak C."/>
            <person name="Sehra H.K."/>
            <person name="Sheridan E."/>
            <person name="Shownkeen R."/>
            <person name="Sims S."/>
            <person name="Skuce C.D."/>
            <person name="Smith M."/>
            <person name="Steward C."/>
            <person name="Subramanian S."/>
            <person name="Sycamore N."/>
            <person name="Tracey A."/>
            <person name="Tromans A."/>
            <person name="Van Helmond Z."/>
            <person name="Wall M."/>
            <person name="Wallis J.M."/>
            <person name="White S."/>
            <person name="Whitehead S.L."/>
            <person name="Wilkinson J.E."/>
            <person name="Willey D.L."/>
            <person name="Williams H."/>
            <person name="Wilming L."/>
            <person name="Wray P.W."/>
            <person name="Wu Z."/>
            <person name="Coulson A."/>
            <person name="Vaudin M."/>
            <person name="Sulston J.E."/>
            <person name="Durbin R.M."/>
            <person name="Hubbard T."/>
            <person name="Wooster R."/>
            <person name="Dunham I."/>
            <person name="Carter N.P."/>
            <person name="McVean G."/>
            <person name="Ross M.T."/>
            <person name="Harrow J."/>
            <person name="Olson M.V."/>
            <person name="Beck S."/>
            <person name="Rogers J."/>
            <person name="Bentley D.R."/>
        </authorList>
    </citation>
    <scope>NUCLEOTIDE SEQUENCE [LARGE SCALE GENOMIC DNA]</scope>
</reference>
<reference key="3">
    <citation type="journal article" date="2004" name="Genome Res.">
        <title>The status, quality, and expansion of the NIH full-length cDNA project: the Mammalian Gene Collection (MGC).</title>
        <authorList>
            <consortium name="The MGC Project Team"/>
        </authorList>
    </citation>
    <scope>NUCLEOTIDE SEQUENCE [LARGE SCALE MRNA]</scope>
    <source>
        <tissue>Kidney</tissue>
    </source>
</reference>
<reference key="4">
    <citation type="journal article" date="2014" name="J. Exp. Med.">
        <title>RHEX, a novel regulator of human erythroid progenitor cell expansion and erythroblast development.</title>
        <authorList>
            <person name="Verma R."/>
            <person name="Su S."/>
            <person name="McCrann D.J."/>
            <person name="Green J.M."/>
            <person name="Leu K."/>
            <person name="Young P.R."/>
            <person name="Schatz P.J."/>
            <person name="Silva J.C."/>
            <person name="Stokes M.P."/>
            <person name="Wojchowski D.M."/>
        </authorList>
    </citation>
    <scope>FUNCTION</scope>
    <scope>INTERACTION WITH GRB2; EPOR AND JAK2</scope>
    <scope>PHOSPHORYLATION AT TYR-132 AND TYR-141</scope>
    <scope>INDUCTION</scope>
    <scope>TISSUE SPECIFICITY</scope>
    <scope>IDENTIFICATION BY MASS SPECTROMETRY</scope>
</reference>